<feature type="chain" id="PRO_0000075419" description="Putative transposase InsK for insertion sequence element IS150">
    <location>
        <begin position="1"/>
        <end position="283"/>
    </location>
</feature>
<feature type="domain" description="Integrase catalytic" evidence="1">
    <location>
        <begin position="117"/>
        <end position="279"/>
    </location>
</feature>
<feature type="sequence conflict" description="In Ref. 1; CAA30086." evidence="4" ref="1">
    <original>R</original>
    <variation>A</variation>
    <location>
        <position position="213"/>
    </location>
</feature>
<feature type="sequence conflict" description="In Ref. 2; no nucleotide entry." evidence="4" ref="2">
    <original>R</original>
    <variation>E</variation>
    <location>
        <position position="213"/>
    </location>
</feature>
<reference key="1">
    <citation type="journal article" date="1988" name="Nucleic Acids Res.">
        <title>IS150: distribution, nucleotide sequence and phylogenetic relationships of a new E. coli insertion element.</title>
        <authorList>
            <person name="Schwartz E."/>
            <person name="Kroeger M."/>
            <person name="Rak B."/>
        </authorList>
    </citation>
    <scope>NUCLEOTIDE SEQUENCE [GENOMIC DNA]</scope>
</reference>
<reference key="2">
    <citation type="journal article" date="1989" name="Genetics">
        <title>IS103, a new insertion element in Escherichia coli: characterization and distribution in natural populations.</title>
        <authorList>
            <person name="Hall B.G."/>
            <person name="Parker L.L."/>
            <person name="Betts P.W."/>
            <person name="Dubose R.F."/>
            <person name="Sawyer S.A."/>
            <person name="Hartl D.L."/>
        </authorList>
    </citation>
    <scope>NUCLEOTIDE SEQUENCE [GENOMIC DNA]</scope>
</reference>
<reference key="3">
    <citation type="journal article" date="1994" name="Nucleic Acids Res.">
        <title>Analysis of the Escherichia coli genome. V. DNA sequence of the region from 76.0 to 81.5 minutes.</title>
        <authorList>
            <person name="Sofia H.J."/>
            <person name="Burland V."/>
            <person name="Daniels D.L."/>
            <person name="Plunkett G. III"/>
            <person name="Blattner F.R."/>
        </authorList>
    </citation>
    <scope>NUCLEOTIDE SEQUENCE [LARGE SCALE GENOMIC DNA]</scope>
    <source>
        <strain>K12 / MG1655 / ATCC 47076</strain>
    </source>
</reference>
<reference key="4">
    <citation type="journal article" date="1997" name="Science">
        <title>The complete genome sequence of Escherichia coli K-12.</title>
        <authorList>
            <person name="Blattner F.R."/>
            <person name="Plunkett G. III"/>
            <person name="Bloch C.A."/>
            <person name="Perna N.T."/>
            <person name="Burland V."/>
            <person name="Riley M."/>
            <person name="Collado-Vides J."/>
            <person name="Glasner J.D."/>
            <person name="Rode C.K."/>
            <person name="Mayhew G.F."/>
            <person name="Gregor J."/>
            <person name="Davis N.W."/>
            <person name="Kirkpatrick H.A."/>
            <person name="Goeden M.A."/>
            <person name="Rose D.J."/>
            <person name="Mau B."/>
            <person name="Shao Y."/>
        </authorList>
    </citation>
    <scope>NUCLEOTIDE SEQUENCE [LARGE SCALE GENOMIC DNA]</scope>
    <source>
        <strain>K12 / MG1655 / ATCC 47076</strain>
    </source>
</reference>
<reference key="5">
    <citation type="journal article" date="2006" name="Mol. Syst. Biol.">
        <title>Highly accurate genome sequences of Escherichia coli K-12 strains MG1655 and W3110.</title>
        <authorList>
            <person name="Hayashi K."/>
            <person name="Morooka N."/>
            <person name="Yamamoto Y."/>
            <person name="Fujita K."/>
            <person name="Isono K."/>
            <person name="Choi S."/>
            <person name="Ohtsubo E."/>
            <person name="Baba T."/>
            <person name="Wanner B.L."/>
            <person name="Mori H."/>
            <person name="Horiuchi T."/>
        </authorList>
    </citation>
    <scope>NUCLEOTIDE SEQUENCE [LARGE SCALE GENOMIC DNA]</scope>
    <source>
        <strain>K12 / W3110 / ATCC 27325 / DSM 5911</strain>
    </source>
</reference>
<reference key="6">
    <citation type="journal article" date="2000" name="Mol. Microbiol.">
        <title>Identification of additional genes belonging to the LexA regulon in Escherichia coli.</title>
        <authorList>
            <person name="Fernandez De Henestrosa A.R."/>
            <person name="Ogi T."/>
            <person name="Aoyagi S."/>
            <person name="Chafin D."/>
            <person name="Hayes J.J."/>
            <person name="Ohmori H."/>
            <person name="Woodgate R."/>
        </authorList>
    </citation>
    <scope>REGULATION BY LEXA</scope>
    <scope>INDUCTION</scope>
    <source>
        <strain>K12 / RW118</strain>
    </source>
</reference>
<keyword id="KW-0233">DNA recombination</keyword>
<keyword id="KW-0238">DNA-binding</keyword>
<keyword id="KW-1185">Reference proteome</keyword>
<keyword id="KW-0814">Transposable element</keyword>
<keyword id="KW-0815">Transposition</keyword>
<gene>
    <name type="primary">insK</name>
    <name evidence="3" type="synonym">dinS</name>
    <name type="ordered locus">b3558</name>
    <name type="ordered locus">JW3528</name>
</gene>
<accession>P19769</accession>
<accession>Q2M7M0</accession>
<sequence>MKVLNELRQFYPLDELLRAAEIPRSTFYYHLKALSKPDKYADVKKRISEIYHENRGRYGYRRVTLSLHREGKQINHKAVQRLMGTLSLKAAIKVKRYRSYRGEVGQTAPNVLQRDFKATRPNEKWVTDVTEFAVNGRKLYLSPVIDLFNNEVISYSLSERPVMNMVENMLDQAFKKLNPHEHPVLHSDQGWQYRMRRYQNILKEHGIKQSMSRKGNCLDNAVVECFFGTLKSECFYLDEFSNISELKDAVTEYIEYYNSRRISLKLKGLTPIEYRNQTYMPRV</sequence>
<comment type="function">
    <text>Involved in the transposition of the insertion sequence IS150.</text>
</comment>
<comment type="induction">
    <text evidence="2">A shorter open reading frame encoding a protein called DinS, encoded by a 0.4 kb mRNA encoded within the insK transcript, is repressed by LexA, induced by DNA damage.</text>
</comment>
<comment type="similarity">
    <text evidence="4">Belongs to the transposase IS3/IS150/IS904 family.</text>
</comment>
<comment type="sequence caution" evidence="4">
    <conflict type="miscellaneous discrepancy">
        <sequence resource="EMBL-CDS" id="AAB18535"/>
    </conflict>
    <text>B-168 has been translated as Asn.</text>
</comment>
<protein>
    <recommendedName>
        <fullName>Putative transposase InsK for insertion sequence element IS150</fullName>
    </recommendedName>
</protein>
<evidence type="ECO:0000255" key="1">
    <source>
        <dbReference type="PROSITE-ProRule" id="PRU00457"/>
    </source>
</evidence>
<evidence type="ECO:0000269" key="2">
    <source>
    </source>
</evidence>
<evidence type="ECO:0000303" key="3">
    <source>
    </source>
</evidence>
<evidence type="ECO:0000305" key="4"/>
<name>INSK_ECOLI</name>
<proteinExistence type="evidence at transcript level"/>
<organism>
    <name type="scientific">Escherichia coli (strain K12)</name>
    <dbReference type="NCBI Taxonomy" id="83333"/>
    <lineage>
        <taxon>Bacteria</taxon>
        <taxon>Pseudomonadati</taxon>
        <taxon>Pseudomonadota</taxon>
        <taxon>Gammaproteobacteria</taxon>
        <taxon>Enterobacterales</taxon>
        <taxon>Enterobacteriaceae</taxon>
        <taxon>Escherichia</taxon>
    </lineage>
</organism>
<dbReference type="EMBL" id="X07037">
    <property type="protein sequence ID" value="CAA30086.1"/>
    <property type="molecule type" value="Genomic_DNA"/>
</dbReference>
<dbReference type="EMBL" id="U00039">
    <property type="protein sequence ID" value="AAB18535.2"/>
    <property type="status" value="ALT_SEQ"/>
    <property type="molecule type" value="Genomic_DNA"/>
</dbReference>
<dbReference type="EMBL" id="U00096">
    <property type="protein sequence ID" value="AAC76582.1"/>
    <property type="molecule type" value="Genomic_DNA"/>
</dbReference>
<dbReference type="EMBL" id="AP009048">
    <property type="protein sequence ID" value="BAE77736.1"/>
    <property type="molecule type" value="Genomic_DNA"/>
</dbReference>
<dbReference type="RefSeq" id="NP_418015.1">
    <property type="nucleotide sequence ID" value="NC_000913.3"/>
</dbReference>
<dbReference type="SMR" id="P19769"/>
<dbReference type="BioGRID" id="4259715">
    <property type="interactions" value="3"/>
</dbReference>
<dbReference type="FunCoup" id="P19769">
    <property type="interactions" value="206"/>
</dbReference>
<dbReference type="IntAct" id="P19769">
    <property type="interactions" value="3"/>
</dbReference>
<dbReference type="STRING" id="511145.b3558"/>
<dbReference type="PaxDb" id="511145-b3558"/>
<dbReference type="EnsemblBacteria" id="AAC76582">
    <property type="protein sequence ID" value="AAC76582"/>
    <property type="gene ID" value="b3558"/>
</dbReference>
<dbReference type="GeneID" id="948081"/>
<dbReference type="KEGG" id="ecj:JW3528"/>
<dbReference type="KEGG" id="eco:b3558"/>
<dbReference type="KEGG" id="ecoc:C3026_19290"/>
<dbReference type="PATRIC" id="fig|511145.12.peg.3672"/>
<dbReference type="eggNOG" id="COG2801">
    <property type="taxonomic scope" value="Bacteria"/>
</dbReference>
<dbReference type="HOGENOM" id="CLU_027402_4_3_6"/>
<dbReference type="InParanoid" id="P19769"/>
<dbReference type="OMA" id="VTQSMSR"/>
<dbReference type="PhylomeDB" id="P19769"/>
<dbReference type="BioCyc" id="EcoCyc:G7777-MONOMER"/>
<dbReference type="PRO" id="PR:P19769"/>
<dbReference type="Proteomes" id="UP000000625">
    <property type="component" value="Chromosome"/>
</dbReference>
<dbReference type="GO" id="GO:0003677">
    <property type="term" value="F:DNA binding"/>
    <property type="evidence" value="ECO:0007669"/>
    <property type="project" value="UniProtKB-KW"/>
</dbReference>
<dbReference type="GO" id="GO:0006974">
    <property type="term" value="P:DNA damage response"/>
    <property type="evidence" value="ECO:0000270"/>
    <property type="project" value="EcoliWiki"/>
</dbReference>
<dbReference type="GO" id="GO:0015074">
    <property type="term" value="P:DNA integration"/>
    <property type="evidence" value="ECO:0007669"/>
    <property type="project" value="InterPro"/>
</dbReference>
<dbReference type="GO" id="GO:0006310">
    <property type="term" value="P:DNA recombination"/>
    <property type="evidence" value="ECO:0007669"/>
    <property type="project" value="UniProtKB-KW"/>
</dbReference>
<dbReference type="GO" id="GO:0032196">
    <property type="term" value="P:transposition"/>
    <property type="evidence" value="ECO:0007669"/>
    <property type="project" value="UniProtKB-KW"/>
</dbReference>
<dbReference type="FunFam" id="3.30.420.10:FF:000057">
    <property type="entry name" value="IS150, transposase orfB"/>
    <property type="match status" value="1"/>
</dbReference>
<dbReference type="Gene3D" id="3.30.420.10">
    <property type="entry name" value="Ribonuclease H-like superfamily/Ribonuclease H"/>
    <property type="match status" value="1"/>
</dbReference>
<dbReference type="InterPro" id="IPR025948">
    <property type="entry name" value="HTH-like_dom"/>
</dbReference>
<dbReference type="InterPro" id="IPR001584">
    <property type="entry name" value="Integrase_cat-core"/>
</dbReference>
<dbReference type="InterPro" id="IPR012337">
    <property type="entry name" value="RNaseH-like_sf"/>
</dbReference>
<dbReference type="InterPro" id="IPR036397">
    <property type="entry name" value="RNaseH_sf"/>
</dbReference>
<dbReference type="InterPro" id="IPR048020">
    <property type="entry name" value="Transpos_IS3"/>
</dbReference>
<dbReference type="InterPro" id="IPR050900">
    <property type="entry name" value="Transposase_IS3/IS150/IS904"/>
</dbReference>
<dbReference type="NCBIfam" id="NF033516">
    <property type="entry name" value="transpos_IS3"/>
    <property type="match status" value="1"/>
</dbReference>
<dbReference type="PANTHER" id="PTHR46889">
    <property type="entry name" value="TRANSPOSASE INSF FOR INSERTION SEQUENCE IS3B-RELATED"/>
    <property type="match status" value="1"/>
</dbReference>
<dbReference type="PANTHER" id="PTHR46889:SF4">
    <property type="entry name" value="TRANSPOSASE INSO FOR INSERTION SEQUENCE ELEMENT IS911B-RELATED"/>
    <property type="match status" value="1"/>
</dbReference>
<dbReference type="Pfam" id="PF13276">
    <property type="entry name" value="HTH_21"/>
    <property type="match status" value="1"/>
</dbReference>
<dbReference type="Pfam" id="PF00665">
    <property type="entry name" value="rve"/>
    <property type="match status" value="1"/>
</dbReference>
<dbReference type="Pfam" id="PF13333">
    <property type="entry name" value="rve_2"/>
    <property type="match status" value="1"/>
</dbReference>
<dbReference type="SUPFAM" id="SSF53098">
    <property type="entry name" value="Ribonuclease H-like"/>
    <property type="match status" value="1"/>
</dbReference>
<dbReference type="PROSITE" id="PS50994">
    <property type="entry name" value="INTEGRASE"/>
    <property type="match status" value="1"/>
</dbReference>